<proteinExistence type="inferred from homology"/>
<protein>
    <recommendedName>
        <fullName evidence="1">Threonine--tRNA ligase</fullName>
        <ecNumber evidence="1">6.1.1.3</ecNumber>
    </recommendedName>
    <alternativeName>
        <fullName evidence="1">Threonyl-tRNA synthetase</fullName>
        <shortName evidence="1">ThrRS</shortName>
    </alternativeName>
</protein>
<evidence type="ECO:0000255" key="1">
    <source>
        <dbReference type="HAMAP-Rule" id="MF_00184"/>
    </source>
</evidence>
<evidence type="ECO:0000255" key="2">
    <source>
        <dbReference type="PROSITE-ProRule" id="PRU01228"/>
    </source>
</evidence>
<feature type="chain" id="PRO_1000020511" description="Threonine--tRNA ligase">
    <location>
        <begin position="1"/>
        <end position="642"/>
    </location>
</feature>
<feature type="domain" description="TGS" evidence="2">
    <location>
        <begin position="1"/>
        <end position="61"/>
    </location>
</feature>
<feature type="region of interest" description="Catalytic" evidence="1">
    <location>
        <begin position="243"/>
        <end position="534"/>
    </location>
</feature>
<feature type="binding site" evidence="1">
    <location>
        <position position="334"/>
    </location>
    <ligand>
        <name>Zn(2+)</name>
        <dbReference type="ChEBI" id="CHEBI:29105"/>
    </ligand>
</feature>
<feature type="binding site" evidence="1">
    <location>
        <position position="385"/>
    </location>
    <ligand>
        <name>Zn(2+)</name>
        <dbReference type="ChEBI" id="CHEBI:29105"/>
    </ligand>
</feature>
<feature type="binding site" evidence="1">
    <location>
        <position position="511"/>
    </location>
    <ligand>
        <name>Zn(2+)</name>
        <dbReference type="ChEBI" id="CHEBI:29105"/>
    </ligand>
</feature>
<feature type="modified residue" description="N6-acetyllysine" evidence="1">
    <location>
        <position position="286"/>
    </location>
</feature>
<organism>
    <name type="scientific">Shigella boydii serotype 4 (strain Sb227)</name>
    <dbReference type="NCBI Taxonomy" id="300268"/>
    <lineage>
        <taxon>Bacteria</taxon>
        <taxon>Pseudomonadati</taxon>
        <taxon>Pseudomonadota</taxon>
        <taxon>Gammaproteobacteria</taxon>
        <taxon>Enterobacterales</taxon>
        <taxon>Enterobacteriaceae</taxon>
        <taxon>Shigella</taxon>
    </lineage>
</organism>
<name>SYT_SHIBS</name>
<gene>
    <name evidence="1" type="primary">thrS</name>
    <name type="ordered locus">SBO_1375</name>
</gene>
<comment type="function">
    <text evidence="1">Catalyzes the attachment of threonine to tRNA(Thr) in a two-step reaction: L-threonine is first activated by ATP to form Thr-AMP and then transferred to the acceptor end of tRNA(Thr). Also edits incorrectly charged L-seryl-tRNA(Thr).</text>
</comment>
<comment type="catalytic activity">
    <reaction evidence="1">
        <text>tRNA(Thr) + L-threonine + ATP = L-threonyl-tRNA(Thr) + AMP + diphosphate + H(+)</text>
        <dbReference type="Rhea" id="RHEA:24624"/>
        <dbReference type="Rhea" id="RHEA-COMP:9670"/>
        <dbReference type="Rhea" id="RHEA-COMP:9704"/>
        <dbReference type="ChEBI" id="CHEBI:15378"/>
        <dbReference type="ChEBI" id="CHEBI:30616"/>
        <dbReference type="ChEBI" id="CHEBI:33019"/>
        <dbReference type="ChEBI" id="CHEBI:57926"/>
        <dbReference type="ChEBI" id="CHEBI:78442"/>
        <dbReference type="ChEBI" id="CHEBI:78534"/>
        <dbReference type="ChEBI" id="CHEBI:456215"/>
        <dbReference type="EC" id="6.1.1.3"/>
    </reaction>
</comment>
<comment type="cofactor">
    <cofactor evidence="1">
        <name>Zn(2+)</name>
        <dbReference type="ChEBI" id="CHEBI:29105"/>
    </cofactor>
    <text evidence="1">Binds 1 zinc ion per subunit.</text>
</comment>
<comment type="subunit">
    <text evidence="1">Homodimer.</text>
</comment>
<comment type="subcellular location">
    <subcellularLocation>
        <location evidence="1">Cytoplasm</location>
    </subcellularLocation>
</comment>
<comment type="similarity">
    <text evidence="1">Belongs to the class-II aminoacyl-tRNA synthetase family.</text>
</comment>
<reference key="1">
    <citation type="journal article" date="2005" name="Nucleic Acids Res.">
        <title>Genome dynamics and diversity of Shigella species, the etiologic agents of bacillary dysentery.</title>
        <authorList>
            <person name="Yang F."/>
            <person name="Yang J."/>
            <person name="Zhang X."/>
            <person name="Chen L."/>
            <person name="Jiang Y."/>
            <person name="Yan Y."/>
            <person name="Tang X."/>
            <person name="Wang J."/>
            <person name="Xiong Z."/>
            <person name="Dong J."/>
            <person name="Xue Y."/>
            <person name="Zhu Y."/>
            <person name="Xu X."/>
            <person name="Sun L."/>
            <person name="Chen S."/>
            <person name="Nie H."/>
            <person name="Peng J."/>
            <person name="Xu J."/>
            <person name="Wang Y."/>
            <person name="Yuan Z."/>
            <person name="Wen Y."/>
            <person name="Yao Z."/>
            <person name="Shen Y."/>
            <person name="Qiang B."/>
            <person name="Hou Y."/>
            <person name="Yu J."/>
            <person name="Jin Q."/>
        </authorList>
    </citation>
    <scope>NUCLEOTIDE SEQUENCE [LARGE SCALE GENOMIC DNA]</scope>
    <source>
        <strain>Sb227</strain>
    </source>
</reference>
<sequence>MPVITLPDGSQRHYDHAVSPMDVALDIGPGLAKACIAGRVNGELVDACDLIENDAQLSIITAKDEEGLEIIRHSCAHLLGHAIKQLWPHTKMAIGPVIDNGFYYDVDLDRTLTQEDVEALEKRMHELAEKNYDVIKKKVSWHAARETFANRGESYKVSILDENIAHDDKPGLYFHEEYVDMCRGPHVPNMRFCHHFKLMKTAGAYWRGDSNNKMLQRIYGTAWADKKALNAYLQRLEEAAKRDHRKIGKQLDLYHMQEEAPGMVFWHNDGWTIFRELEVFVRSKLKEYQYQEVKGPFMMDRVLWEKTGHWDNYKDAMFTTSSENREYCIKPMNCPGHVQIFNQGLKSYRDLPLRMAEFGSCHRNEPSGSLHGLMRVRGFTQDDAHIFCTEEQIRDEVNGCIRLVYDMYSTFGFEKIVVKLSTRPEKRIGSDEMWDRAEADLAVALEENNIPFEYQLGEGAFYGPKIEFTLYDCLDRAWQCGTVQLDFSLPSRLSASYVGEDNERKVPVMIHRAILGSMERFIGILTEEFAGFFPTWLAPVQVVIMNITDSQSEYVNELTQKLSNAGIRVKADLRNEKIGFKIREHTLRRVPYMLVCGDKEVESGKVAVRTRRGKDLGSMDVNEVIEKLQQEIRSRSLKQLEE</sequence>
<keyword id="KW-0007">Acetylation</keyword>
<keyword id="KW-0030">Aminoacyl-tRNA synthetase</keyword>
<keyword id="KW-0067">ATP-binding</keyword>
<keyword id="KW-0963">Cytoplasm</keyword>
<keyword id="KW-0436">Ligase</keyword>
<keyword id="KW-0479">Metal-binding</keyword>
<keyword id="KW-0547">Nucleotide-binding</keyword>
<keyword id="KW-0648">Protein biosynthesis</keyword>
<keyword id="KW-0694">RNA-binding</keyword>
<keyword id="KW-0820">tRNA-binding</keyword>
<keyword id="KW-0862">Zinc</keyword>
<accession>Q321L0</accession>
<dbReference type="EC" id="6.1.1.3" evidence="1"/>
<dbReference type="EMBL" id="CP000036">
    <property type="protein sequence ID" value="ABB65998.1"/>
    <property type="molecule type" value="Genomic_DNA"/>
</dbReference>
<dbReference type="RefSeq" id="WP_001144196.1">
    <property type="nucleotide sequence ID" value="NC_007613.1"/>
</dbReference>
<dbReference type="SMR" id="Q321L0"/>
<dbReference type="KEGG" id="sbo:SBO_1375"/>
<dbReference type="HOGENOM" id="CLU_008554_0_1_6"/>
<dbReference type="Proteomes" id="UP000007067">
    <property type="component" value="Chromosome"/>
</dbReference>
<dbReference type="GO" id="GO:0005829">
    <property type="term" value="C:cytosol"/>
    <property type="evidence" value="ECO:0007669"/>
    <property type="project" value="TreeGrafter"/>
</dbReference>
<dbReference type="GO" id="GO:0005524">
    <property type="term" value="F:ATP binding"/>
    <property type="evidence" value="ECO:0007669"/>
    <property type="project" value="UniProtKB-UniRule"/>
</dbReference>
<dbReference type="GO" id="GO:0046872">
    <property type="term" value="F:metal ion binding"/>
    <property type="evidence" value="ECO:0007669"/>
    <property type="project" value="UniProtKB-KW"/>
</dbReference>
<dbReference type="GO" id="GO:0004829">
    <property type="term" value="F:threonine-tRNA ligase activity"/>
    <property type="evidence" value="ECO:0007669"/>
    <property type="project" value="UniProtKB-UniRule"/>
</dbReference>
<dbReference type="GO" id="GO:0000049">
    <property type="term" value="F:tRNA binding"/>
    <property type="evidence" value="ECO:0007669"/>
    <property type="project" value="UniProtKB-KW"/>
</dbReference>
<dbReference type="GO" id="GO:0006435">
    <property type="term" value="P:threonyl-tRNA aminoacylation"/>
    <property type="evidence" value="ECO:0007669"/>
    <property type="project" value="UniProtKB-UniRule"/>
</dbReference>
<dbReference type="CDD" id="cd01667">
    <property type="entry name" value="TGS_ThrRS"/>
    <property type="match status" value="1"/>
</dbReference>
<dbReference type="CDD" id="cd00860">
    <property type="entry name" value="ThrRS_anticodon"/>
    <property type="match status" value="1"/>
</dbReference>
<dbReference type="CDD" id="cd00771">
    <property type="entry name" value="ThrRS_core"/>
    <property type="match status" value="1"/>
</dbReference>
<dbReference type="FunFam" id="3.10.20.30:FF:000005">
    <property type="entry name" value="Threonine--tRNA ligase"/>
    <property type="match status" value="1"/>
</dbReference>
<dbReference type="FunFam" id="3.30.54.20:FF:000002">
    <property type="entry name" value="Threonine--tRNA ligase"/>
    <property type="match status" value="1"/>
</dbReference>
<dbReference type="FunFam" id="3.30.930.10:FF:000002">
    <property type="entry name" value="Threonine--tRNA ligase"/>
    <property type="match status" value="1"/>
</dbReference>
<dbReference type="FunFam" id="3.40.50.800:FF:000001">
    <property type="entry name" value="Threonine--tRNA ligase"/>
    <property type="match status" value="1"/>
</dbReference>
<dbReference type="FunFam" id="3.30.980.10:FF:000005">
    <property type="entry name" value="Threonyl-tRNA synthetase, mitochondrial"/>
    <property type="match status" value="1"/>
</dbReference>
<dbReference type="Gene3D" id="3.10.20.30">
    <property type="match status" value="1"/>
</dbReference>
<dbReference type="Gene3D" id="3.30.54.20">
    <property type="match status" value="1"/>
</dbReference>
<dbReference type="Gene3D" id="3.40.50.800">
    <property type="entry name" value="Anticodon-binding domain"/>
    <property type="match status" value="1"/>
</dbReference>
<dbReference type="Gene3D" id="3.30.930.10">
    <property type="entry name" value="Bira Bifunctional Protein, Domain 2"/>
    <property type="match status" value="1"/>
</dbReference>
<dbReference type="Gene3D" id="3.30.980.10">
    <property type="entry name" value="Threonyl-trna Synthetase, Chain A, domain 2"/>
    <property type="match status" value="1"/>
</dbReference>
<dbReference type="HAMAP" id="MF_00184">
    <property type="entry name" value="Thr_tRNA_synth"/>
    <property type="match status" value="1"/>
</dbReference>
<dbReference type="InterPro" id="IPR002314">
    <property type="entry name" value="aa-tRNA-synt_IIb"/>
</dbReference>
<dbReference type="InterPro" id="IPR006195">
    <property type="entry name" value="aa-tRNA-synth_II"/>
</dbReference>
<dbReference type="InterPro" id="IPR045864">
    <property type="entry name" value="aa-tRNA-synth_II/BPL/LPL"/>
</dbReference>
<dbReference type="InterPro" id="IPR004154">
    <property type="entry name" value="Anticodon-bd"/>
</dbReference>
<dbReference type="InterPro" id="IPR036621">
    <property type="entry name" value="Anticodon-bd_dom_sf"/>
</dbReference>
<dbReference type="InterPro" id="IPR012675">
    <property type="entry name" value="Beta-grasp_dom_sf"/>
</dbReference>
<dbReference type="InterPro" id="IPR004095">
    <property type="entry name" value="TGS"/>
</dbReference>
<dbReference type="InterPro" id="IPR012676">
    <property type="entry name" value="TGS-like"/>
</dbReference>
<dbReference type="InterPro" id="IPR002320">
    <property type="entry name" value="Thr-tRNA-ligase_IIa"/>
</dbReference>
<dbReference type="InterPro" id="IPR018163">
    <property type="entry name" value="Thr/Ala-tRNA-synth_IIc_edit"/>
</dbReference>
<dbReference type="InterPro" id="IPR047246">
    <property type="entry name" value="ThrRS_anticodon"/>
</dbReference>
<dbReference type="InterPro" id="IPR033728">
    <property type="entry name" value="ThrRS_core"/>
</dbReference>
<dbReference type="InterPro" id="IPR012947">
    <property type="entry name" value="tRNA_SAD"/>
</dbReference>
<dbReference type="NCBIfam" id="TIGR00418">
    <property type="entry name" value="thrS"/>
    <property type="match status" value="1"/>
</dbReference>
<dbReference type="PANTHER" id="PTHR11451:SF44">
    <property type="entry name" value="THREONINE--TRNA LIGASE, CHLOROPLASTIC_MITOCHONDRIAL 2"/>
    <property type="match status" value="1"/>
</dbReference>
<dbReference type="PANTHER" id="PTHR11451">
    <property type="entry name" value="THREONINE-TRNA LIGASE"/>
    <property type="match status" value="1"/>
</dbReference>
<dbReference type="Pfam" id="PF03129">
    <property type="entry name" value="HGTP_anticodon"/>
    <property type="match status" value="1"/>
</dbReference>
<dbReference type="Pfam" id="PF02824">
    <property type="entry name" value="TGS"/>
    <property type="match status" value="1"/>
</dbReference>
<dbReference type="Pfam" id="PF00587">
    <property type="entry name" value="tRNA-synt_2b"/>
    <property type="match status" value="1"/>
</dbReference>
<dbReference type="Pfam" id="PF07973">
    <property type="entry name" value="tRNA_SAD"/>
    <property type="match status" value="1"/>
</dbReference>
<dbReference type="PRINTS" id="PR01047">
    <property type="entry name" value="TRNASYNTHTHR"/>
</dbReference>
<dbReference type="SMART" id="SM00863">
    <property type="entry name" value="tRNA_SAD"/>
    <property type="match status" value="1"/>
</dbReference>
<dbReference type="SUPFAM" id="SSF52954">
    <property type="entry name" value="Class II aaRS ABD-related"/>
    <property type="match status" value="1"/>
</dbReference>
<dbReference type="SUPFAM" id="SSF55681">
    <property type="entry name" value="Class II aaRS and biotin synthetases"/>
    <property type="match status" value="1"/>
</dbReference>
<dbReference type="SUPFAM" id="SSF81271">
    <property type="entry name" value="TGS-like"/>
    <property type="match status" value="1"/>
</dbReference>
<dbReference type="SUPFAM" id="SSF55186">
    <property type="entry name" value="ThrRS/AlaRS common domain"/>
    <property type="match status" value="1"/>
</dbReference>
<dbReference type="PROSITE" id="PS50862">
    <property type="entry name" value="AA_TRNA_LIGASE_II"/>
    <property type="match status" value="1"/>
</dbReference>
<dbReference type="PROSITE" id="PS51880">
    <property type="entry name" value="TGS"/>
    <property type="match status" value="1"/>
</dbReference>